<sequence length="182" mass="19477">MKVSADTPGHDDPGPGRRLGLDVGTVRIGVAASDRDAKLAMPVETVPRETGFKGPDLADIDRLVAIVEEYNAVEVIVGLPTDLQGNGSASVKHAKEIAFRVRRRLTNAGKNIPVRLGDERLTTVVATQALRASGVSEKAGRKVIDQAAAVEILQTWLDARTRALEPQSTDTQDFDEKGNFPG</sequence>
<name>YQGF_CORGL</name>
<keyword id="KW-0963">Cytoplasm</keyword>
<keyword id="KW-0378">Hydrolase</keyword>
<keyword id="KW-0540">Nuclease</keyword>
<keyword id="KW-1185">Reference proteome</keyword>
<keyword id="KW-0690">Ribosome biogenesis</keyword>
<evidence type="ECO:0000255" key="1">
    <source>
        <dbReference type="HAMAP-Rule" id="MF_00651"/>
    </source>
</evidence>
<accession>Q8NQ23</accession>
<gene>
    <name type="ordered locus">Cgl1631</name>
    <name type="ordered locus">cg1837</name>
</gene>
<protein>
    <recommendedName>
        <fullName evidence="1">Putative pre-16S rRNA nuclease</fullName>
        <ecNumber evidence="1">3.1.-.-</ecNumber>
    </recommendedName>
</protein>
<dbReference type="EC" id="3.1.-.-" evidence="1"/>
<dbReference type="EMBL" id="BA000036">
    <property type="protein sequence ID" value="BAB99024.1"/>
    <property type="molecule type" value="Genomic_DNA"/>
</dbReference>
<dbReference type="EMBL" id="BX927152">
    <property type="protein sequence ID" value="CAF21640.1"/>
    <property type="molecule type" value="Genomic_DNA"/>
</dbReference>
<dbReference type="RefSeq" id="NP_600845.1">
    <property type="nucleotide sequence ID" value="NC_003450.3"/>
</dbReference>
<dbReference type="SMR" id="Q8NQ23"/>
<dbReference type="STRING" id="196627.cg1837"/>
<dbReference type="KEGG" id="cgb:cg1837"/>
<dbReference type="KEGG" id="cgl:Cgl1631"/>
<dbReference type="PATRIC" id="fig|196627.13.peg.1592"/>
<dbReference type="eggNOG" id="COG0816">
    <property type="taxonomic scope" value="Bacteria"/>
</dbReference>
<dbReference type="HOGENOM" id="CLU_098240_0_1_11"/>
<dbReference type="OrthoDB" id="9790539at2"/>
<dbReference type="BioCyc" id="CORYNE:G18NG-11216-MONOMER"/>
<dbReference type="Proteomes" id="UP000000582">
    <property type="component" value="Chromosome"/>
</dbReference>
<dbReference type="Proteomes" id="UP000001009">
    <property type="component" value="Chromosome"/>
</dbReference>
<dbReference type="GO" id="GO:0005829">
    <property type="term" value="C:cytosol"/>
    <property type="evidence" value="ECO:0007669"/>
    <property type="project" value="TreeGrafter"/>
</dbReference>
<dbReference type="GO" id="GO:0004518">
    <property type="term" value="F:nuclease activity"/>
    <property type="evidence" value="ECO:0007669"/>
    <property type="project" value="UniProtKB-KW"/>
</dbReference>
<dbReference type="GO" id="GO:0000967">
    <property type="term" value="P:rRNA 5'-end processing"/>
    <property type="evidence" value="ECO:0007669"/>
    <property type="project" value="UniProtKB-UniRule"/>
</dbReference>
<dbReference type="CDD" id="cd16964">
    <property type="entry name" value="YqgF"/>
    <property type="match status" value="1"/>
</dbReference>
<dbReference type="Gene3D" id="3.30.420.140">
    <property type="entry name" value="YqgF/RNase H-like domain"/>
    <property type="match status" value="1"/>
</dbReference>
<dbReference type="HAMAP" id="MF_00651">
    <property type="entry name" value="Nuclease_YqgF"/>
    <property type="match status" value="1"/>
</dbReference>
<dbReference type="InterPro" id="IPR012337">
    <property type="entry name" value="RNaseH-like_sf"/>
</dbReference>
<dbReference type="InterPro" id="IPR005227">
    <property type="entry name" value="YqgF"/>
</dbReference>
<dbReference type="InterPro" id="IPR006641">
    <property type="entry name" value="YqgF/RNaseH-like_dom"/>
</dbReference>
<dbReference type="InterPro" id="IPR037027">
    <property type="entry name" value="YqgF/RNaseH-like_dom_sf"/>
</dbReference>
<dbReference type="NCBIfam" id="TIGR00250">
    <property type="entry name" value="RNAse_H_YqgF"/>
    <property type="match status" value="1"/>
</dbReference>
<dbReference type="PANTHER" id="PTHR33317">
    <property type="entry name" value="POLYNUCLEOTIDYL TRANSFERASE, RIBONUCLEASE H-LIKE SUPERFAMILY PROTEIN"/>
    <property type="match status" value="1"/>
</dbReference>
<dbReference type="PANTHER" id="PTHR33317:SF4">
    <property type="entry name" value="POLYNUCLEOTIDYL TRANSFERASE, RIBONUCLEASE H-LIKE SUPERFAMILY PROTEIN"/>
    <property type="match status" value="1"/>
</dbReference>
<dbReference type="Pfam" id="PF03652">
    <property type="entry name" value="RuvX"/>
    <property type="match status" value="1"/>
</dbReference>
<dbReference type="SMART" id="SM00732">
    <property type="entry name" value="YqgFc"/>
    <property type="match status" value="1"/>
</dbReference>
<dbReference type="SUPFAM" id="SSF53098">
    <property type="entry name" value="Ribonuclease H-like"/>
    <property type="match status" value="1"/>
</dbReference>
<reference key="1">
    <citation type="journal article" date="2003" name="Appl. Microbiol. Biotechnol.">
        <title>The Corynebacterium glutamicum genome: features and impacts on biotechnological processes.</title>
        <authorList>
            <person name="Ikeda M."/>
            <person name="Nakagawa S."/>
        </authorList>
    </citation>
    <scope>NUCLEOTIDE SEQUENCE [LARGE SCALE GENOMIC DNA]</scope>
    <source>
        <strain>ATCC 13032 / DSM 20300 / JCM 1318 / BCRC 11384 / CCUG 27702 / LMG 3730 / NBRC 12168 / NCIMB 10025 / NRRL B-2784 / 534</strain>
    </source>
</reference>
<reference key="2">
    <citation type="journal article" date="2003" name="J. Biotechnol.">
        <title>The complete Corynebacterium glutamicum ATCC 13032 genome sequence and its impact on the production of L-aspartate-derived amino acids and vitamins.</title>
        <authorList>
            <person name="Kalinowski J."/>
            <person name="Bathe B."/>
            <person name="Bartels D."/>
            <person name="Bischoff N."/>
            <person name="Bott M."/>
            <person name="Burkovski A."/>
            <person name="Dusch N."/>
            <person name="Eggeling L."/>
            <person name="Eikmanns B.J."/>
            <person name="Gaigalat L."/>
            <person name="Goesmann A."/>
            <person name="Hartmann M."/>
            <person name="Huthmacher K."/>
            <person name="Kraemer R."/>
            <person name="Linke B."/>
            <person name="McHardy A.C."/>
            <person name="Meyer F."/>
            <person name="Moeckel B."/>
            <person name="Pfefferle W."/>
            <person name="Puehler A."/>
            <person name="Rey D.A."/>
            <person name="Rueckert C."/>
            <person name="Rupp O."/>
            <person name="Sahm H."/>
            <person name="Wendisch V.F."/>
            <person name="Wiegraebe I."/>
            <person name="Tauch A."/>
        </authorList>
    </citation>
    <scope>NUCLEOTIDE SEQUENCE [LARGE SCALE GENOMIC DNA]</scope>
    <source>
        <strain>ATCC 13032 / DSM 20300 / JCM 1318 / BCRC 11384 / CCUG 27702 / LMG 3730 / NBRC 12168 / NCIMB 10025 / NRRL B-2784 / 534</strain>
    </source>
</reference>
<proteinExistence type="inferred from homology"/>
<comment type="function">
    <text evidence="1">Could be a nuclease involved in processing of the 5'-end of pre-16S rRNA.</text>
</comment>
<comment type="subcellular location">
    <subcellularLocation>
        <location evidence="1">Cytoplasm</location>
    </subcellularLocation>
</comment>
<comment type="similarity">
    <text evidence="1">Belongs to the YqgF nuclease family.</text>
</comment>
<organism>
    <name type="scientific">Corynebacterium glutamicum (strain ATCC 13032 / DSM 20300 / JCM 1318 / BCRC 11384 / CCUG 27702 / LMG 3730 / NBRC 12168 / NCIMB 10025 / NRRL B-2784 / 534)</name>
    <dbReference type="NCBI Taxonomy" id="196627"/>
    <lineage>
        <taxon>Bacteria</taxon>
        <taxon>Bacillati</taxon>
        <taxon>Actinomycetota</taxon>
        <taxon>Actinomycetes</taxon>
        <taxon>Mycobacteriales</taxon>
        <taxon>Corynebacteriaceae</taxon>
        <taxon>Corynebacterium</taxon>
    </lineage>
</organism>
<feature type="chain" id="PRO_0000172054" description="Putative pre-16S rRNA nuclease">
    <location>
        <begin position="1"/>
        <end position="182"/>
    </location>
</feature>